<dbReference type="EC" id="3.6.4.13" evidence="1"/>
<dbReference type="EMBL" id="AR550432">
    <property type="status" value="NOT_ANNOTATED_CDS"/>
    <property type="molecule type" value="Genomic_DNA"/>
</dbReference>
<dbReference type="EMBL" id="CP017630">
    <property type="protein sequence ID" value="AOW31631.1"/>
    <property type="molecule type" value="Genomic_DNA"/>
</dbReference>
<dbReference type="RefSeq" id="XP_719308.2">
    <property type="nucleotide sequence ID" value="XM_714215.2"/>
</dbReference>
<dbReference type="SMR" id="Q5ACU6"/>
<dbReference type="FunCoup" id="Q5ACU6">
    <property type="interactions" value="1197"/>
</dbReference>
<dbReference type="STRING" id="237561.Q5ACU6"/>
<dbReference type="EnsemblFungi" id="CR_09740W_A-T">
    <property type="protein sequence ID" value="CR_09740W_A-T-p1"/>
    <property type="gene ID" value="CR_09740W_A"/>
</dbReference>
<dbReference type="GeneID" id="3639008"/>
<dbReference type="KEGG" id="cal:CAALFM_CR09740WA"/>
<dbReference type="CGD" id="CAL0000176052">
    <property type="gene designation" value="orf19.7546"/>
</dbReference>
<dbReference type="VEuPathDB" id="FungiDB:CR_09740W_A"/>
<dbReference type="eggNOG" id="KOG0330">
    <property type="taxonomic scope" value="Eukaryota"/>
</dbReference>
<dbReference type="HOGENOM" id="CLU_003041_1_1_1"/>
<dbReference type="InParanoid" id="Q5ACU6"/>
<dbReference type="OMA" id="GIGIKCC"/>
<dbReference type="OrthoDB" id="10261904at2759"/>
<dbReference type="Proteomes" id="UP000000559">
    <property type="component" value="Chromosome R"/>
</dbReference>
<dbReference type="GO" id="GO:0005730">
    <property type="term" value="C:nucleolus"/>
    <property type="evidence" value="ECO:0007669"/>
    <property type="project" value="EnsemblFungi"/>
</dbReference>
<dbReference type="GO" id="GO:0005634">
    <property type="term" value="C:nucleus"/>
    <property type="evidence" value="ECO:0000318"/>
    <property type="project" value="GO_Central"/>
</dbReference>
<dbReference type="GO" id="GO:0032040">
    <property type="term" value="C:small-subunit processome"/>
    <property type="evidence" value="ECO:0007669"/>
    <property type="project" value="EnsemblFungi"/>
</dbReference>
<dbReference type="GO" id="GO:0005524">
    <property type="term" value="F:ATP binding"/>
    <property type="evidence" value="ECO:0007669"/>
    <property type="project" value="UniProtKB-KW"/>
</dbReference>
<dbReference type="GO" id="GO:0016887">
    <property type="term" value="F:ATP hydrolysis activity"/>
    <property type="evidence" value="ECO:0007669"/>
    <property type="project" value="RHEA"/>
</dbReference>
<dbReference type="GO" id="GO:0003723">
    <property type="term" value="F:RNA binding"/>
    <property type="evidence" value="ECO:0007669"/>
    <property type="project" value="UniProtKB-KW"/>
</dbReference>
<dbReference type="GO" id="GO:0003724">
    <property type="term" value="F:RNA helicase activity"/>
    <property type="evidence" value="ECO:0007669"/>
    <property type="project" value="UniProtKB-EC"/>
</dbReference>
<dbReference type="GO" id="GO:0000462">
    <property type="term" value="P:maturation of SSU-rRNA from tricistronic rRNA transcript (SSU-rRNA, 5.8S rRNA, LSU-rRNA)"/>
    <property type="evidence" value="ECO:0007669"/>
    <property type="project" value="EnsemblFungi"/>
</dbReference>
<dbReference type="GO" id="GO:0006364">
    <property type="term" value="P:rRNA processing"/>
    <property type="evidence" value="ECO:0000318"/>
    <property type="project" value="GO_Central"/>
</dbReference>
<dbReference type="CDD" id="cd17954">
    <property type="entry name" value="DEADc_DDX47"/>
    <property type="match status" value="1"/>
</dbReference>
<dbReference type="CDD" id="cd18787">
    <property type="entry name" value="SF2_C_DEAD"/>
    <property type="match status" value="1"/>
</dbReference>
<dbReference type="Gene3D" id="3.40.50.300">
    <property type="entry name" value="P-loop containing nucleotide triphosphate hydrolases"/>
    <property type="match status" value="2"/>
</dbReference>
<dbReference type="InterPro" id="IPR044765">
    <property type="entry name" value="DDX47/Rrp3_DEADc"/>
</dbReference>
<dbReference type="InterPro" id="IPR011545">
    <property type="entry name" value="DEAD/DEAH_box_helicase_dom"/>
</dbReference>
<dbReference type="InterPro" id="IPR050079">
    <property type="entry name" value="DEAD_box_RNA_helicase"/>
</dbReference>
<dbReference type="InterPro" id="IPR014001">
    <property type="entry name" value="Helicase_ATP-bd"/>
</dbReference>
<dbReference type="InterPro" id="IPR001650">
    <property type="entry name" value="Helicase_C-like"/>
</dbReference>
<dbReference type="InterPro" id="IPR027417">
    <property type="entry name" value="P-loop_NTPase"/>
</dbReference>
<dbReference type="InterPro" id="IPR000629">
    <property type="entry name" value="RNA-helicase_DEAD-box_CS"/>
</dbReference>
<dbReference type="InterPro" id="IPR014014">
    <property type="entry name" value="RNA_helicase_DEAD_Q_motif"/>
</dbReference>
<dbReference type="PANTHER" id="PTHR47959:SF24">
    <property type="entry name" value="ATP-DEPENDENT RNA HELICASE"/>
    <property type="match status" value="1"/>
</dbReference>
<dbReference type="PANTHER" id="PTHR47959">
    <property type="entry name" value="ATP-DEPENDENT RNA HELICASE RHLE-RELATED"/>
    <property type="match status" value="1"/>
</dbReference>
<dbReference type="Pfam" id="PF00270">
    <property type="entry name" value="DEAD"/>
    <property type="match status" value="1"/>
</dbReference>
<dbReference type="Pfam" id="PF00271">
    <property type="entry name" value="Helicase_C"/>
    <property type="match status" value="1"/>
</dbReference>
<dbReference type="SMART" id="SM00487">
    <property type="entry name" value="DEXDc"/>
    <property type="match status" value="1"/>
</dbReference>
<dbReference type="SMART" id="SM00490">
    <property type="entry name" value="HELICc"/>
    <property type="match status" value="1"/>
</dbReference>
<dbReference type="SUPFAM" id="SSF52540">
    <property type="entry name" value="P-loop containing nucleoside triphosphate hydrolases"/>
    <property type="match status" value="1"/>
</dbReference>
<dbReference type="PROSITE" id="PS00039">
    <property type="entry name" value="DEAD_ATP_HELICASE"/>
    <property type="match status" value="1"/>
</dbReference>
<dbReference type="PROSITE" id="PS51192">
    <property type="entry name" value="HELICASE_ATP_BIND_1"/>
    <property type="match status" value="1"/>
</dbReference>
<dbReference type="PROSITE" id="PS51194">
    <property type="entry name" value="HELICASE_CTER"/>
    <property type="match status" value="1"/>
</dbReference>
<dbReference type="PROSITE" id="PS51195">
    <property type="entry name" value="Q_MOTIF"/>
    <property type="match status" value="1"/>
</dbReference>
<gene>
    <name evidence="1" type="primary">RRP3</name>
    <name type="ordered locus">CAALFM_CR09740WA</name>
    <name type="ORF">CaO19.7546</name>
</gene>
<protein>
    <recommendedName>
        <fullName evidence="5">ATP-dependent rRNA helicase RRP3</fullName>
        <ecNumber evidence="1">3.6.4.13</ecNumber>
    </recommendedName>
</protein>
<accession>Q5ACU6</accession>
<accession>A0A1D8PU15</accession>
<sequence>MTMMNEKLKKEKKKIFGVITPFQKYLYTPRIINTVHLIIMSSKGITKKKVKSLKNLDSTKKLAEKIKQQALQKQQKQQKQQEQENANHNQTESSLSSSSSTTSSSITTIDPDAELKFKTFKELNLVPDLLESIESMKFTKPTPIQSEAIPHALEGKDIIGLAQTGSGKTAAFAIPILQSLWHAQQPYFALVLAPTRELAFQIKDTFDALGSSMGLRSSCIVGGMDMMDQARDLMRKPHVIVATPGRIMDHLEHTKGFSLKNLKYLVMDEADRLLDMDFGPALDKILKVIPIKRTTYLFSATMTNKIEKLQRASLHNPVRVAVSSKYQTADNLVQSMMLVNDGYKNTILIHLLNEFMGKSIIVFTRTVAHAQRTALLARILGFNAVPLHGQLSQSQRLGSLNKFKSNQANILVATDVAARGLDIPSVDVVINYDIPTDSKAYIHRVGRTARAGRSGKSISLITQYDLEMYLRIESVLGKKLPKEDKPPKEVLDALHVHVDKATAEAIRQTKEIHDKRNGGGGRRRNRDDADREER</sequence>
<proteinExistence type="inferred from homology"/>
<comment type="function">
    <text evidence="1">ATP-dependent rRNA helicase required for pre-ribosomal RNA processing. Involved in the maturation of the 35S-pre-rRNA and to its cleavage to mature 18S rRNA.</text>
</comment>
<comment type="catalytic activity">
    <reaction evidence="1">
        <text>ATP + H2O = ADP + phosphate + H(+)</text>
        <dbReference type="Rhea" id="RHEA:13065"/>
        <dbReference type="ChEBI" id="CHEBI:15377"/>
        <dbReference type="ChEBI" id="CHEBI:15378"/>
        <dbReference type="ChEBI" id="CHEBI:30616"/>
        <dbReference type="ChEBI" id="CHEBI:43474"/>
        <dbReference type="ChEBI" id="CHEBI:456216"/>
        <dbReference type="EC" id="3.6.4.13"/>
    </reaction>
</comment>
<comment type="subunit">
    <text evidence="1">Interacts with the SSU processome.</text>
</comment>
<comment type="subcellular location">
    <subcellularLocation>
        <location evidence="5">Nucleus</location>
    </subcellularLocation>
</comment>
<comment type="domain">
    <text evidence="5">The Q motif is unique to and characteristic of the DEAD box family of RNA helicases and controls ATP binding and hydrolysis.</text>
</comment>
<comment type="similarity">
    <text evidence="5">Belongs to the DEAD box helicase family. DDX47/RRP3 subfamily.</text>
</comment>
<name>RRP3_CANAL</name>
<keyword id="KW-0067">ATP-binding</keyword>
<keyword id="KW-0347">Helicase</keyword>
<keyword id="KW-0378">Hydrolase</keyword>
<keyword id="KW-0547">Nucleotide-binding</keyword>
<keyword id="KW-0539">Nucleus</keyword>
<keyword id="KW-1185">Reference proteome</keyword>
<keyword id="KW-0690">Ribosome biogenesis</keyword>
<keyword id="KW-0694">RNA-binding</keyword>
<keyword id="KW-0698">rRNA processing</keyword>
<organism>
    <name type="scientific">Candida albicans (strain SC5314 / ATCC MYA-2876)</name>
    <name type="common">Yeast</name>
    <dbReference type="NCBI Taxonomy" id="237561"/>
    <lineage>
        <taxon>Eukaryota</taxon>
        <taxon>Fungi</taxon>
        <taxon>Dikarya</taxon>
        <taxon>Ascomycota</taxon>
        <taxon>Saccharomycotina</taxon>
        <taxon>Pichiomycetes</taxon>
        <taxon>Debaryomycetaceae</taxon>
        <taxon>Candida/Lodderomyces clade</taxon>
        <taxon>Candida</taxon>
    </lineage>
</organism>
<evidence type="ECO:0000250" key="1">
    <source>
        <dbReference type="UniProtKB" id="P38712"/>
    </source>
</evidence>
<evidence type="ECO:0000255" key="2">
    <source>
        <dbReference type="PROSITE-ProRule" id="PRU00541"/>
    </source>
</evidence>
<evidence type="ECO:0000255" key="3">
    <source>
        <dbReference type="PROSITE-ProRule" id="PRU00542"/>
    </source>
</evidence>
<evidence type="ECO:0000256" key="4">
    <source>
        <dbReference type="SAM" id="MobiDB-lite"/>
    </source>
</evidence>
<evidence type="ECO:0000305" key="5"/>
<feature type="chain" id="PRO_0000232270" description="ATP-dependent rRNA helicase RRP3">
    <location>
        <begin position="1"/>
        <end position="534"/>
    </location>
</feature>
<feature type="domain" description="Helicase ATP-binding" evidence="2">
    <location>
        <begin position="149"/>
        <end position="320"/>
    </location>
</feature>
<feature type="domain" description="Helicase C-terminal" evidence="3">
    <location>
        <begin position="347"/>
        <end position="492"/>
    </location>
</feature>
<feature type="region of interest" description="Disordered" evidence="4">
    <location>
        <begin position="67"/>
        <end position="107"/>
    </location>
</feature>
<feature type="region of interest" description="Disordered" evidence="4">
    <location>
        <begin position="505"/>
        <end position="534"/>
    </location>
</feature>
<feature type="short sequence motif" description="Q motif" evidence="5">
    <location>
        <begin position="118"/>
        <end position="146"/>
    </location>
</feature>
<feature type="short sequence motif" description="DEAD box" evidence="5">
    <location>
        <begin position="268"/>
        <end position="271"/>
    </location>
</feature>
<feature type="compositionally biased region" description="Low complexity" evidence="4">
    <location>
        <begin position="68"/>
        <end position="80"/>
    </location>
</feature>
<feature type="compositionally biased region" description="Low complexity" evidence="4">
    <location>
        <begin position="91"/>
        <end position="107"/>
    </location>
</feature>
<feature type="compositionally biased region" description="Basic and acidic residues" evidence="4">
    <location>
        <begin position="505"/>
        <end position="517"/>
    </location>
</feature>
<feature type="compositionally biased region" description="Basic and acidic residues" evidence="4">
    <location>
        <begin position="525"/>
        <end position="534"/>
    </location>
</feature>
<feature type="binding site" evidence="2">
    <location>
        <begin position="162"/>
        <end position="169"/>
    </location>
    <ligand>
        <name>ATP</name>
        <dbReference type="ChEBI" id="CHEBI:30616"/>
    </ligand>
</feature>
<reference key="1">
    <citation type="patent" date="2004-06-08" number="US6747137">
        <title>Nucleic acid sequences relating to Candida albicans for diagnostics and therapeutics.</title>
        <authorList>
            <person name="Weinstock K.G."/>
            <person name="Bush D."/>
        </authorList>
    </citation>
    <scope>NUCLEOTIDE SEQUENCE [GENOMIC DNA]</scope>
</reference>
<reference key="2">
    <citation type="journal article" date="2004" name="Proc. Natl. Acad. Sci. U.S.A.">
        <title>The diploid genome sequence of Candida albicans.</title>
        <authorList>
            <person name="Jones T."/>
            <person name="Federspiel N.A."/>
            <person name="Chibana H."/>
            <person name="Dungan J."/>
            <person name="Kalman S."/>
            <person name="Magee B.B."/>
            <person name="Newport G."/>
            <person name="Thorstenson Y.R."/>
            <person name="Agabian N."/>
            <person name="Magee P.T."/>
            <person name="Davis R.W."/>
            <person name="Scherer S."/>
        </authorList>
    </citation>
    <scope>NUCLEOTIDE SEQUENCE [LARGE SCALE GENOMIC DNA]</scope>
    <source>
        <strain>SC5314 / ATCC MYA-2876</strain>
    </source>
</reference>
<reference key="3">
    <citation type="journal article" date="2007" name="Genome Biol.">
        <title>Assembly of the Candida albicans genome into sixteen supercontigs aligned on the eight chromosomes.</title>
        <authorList>
            <person name="van het Hoog M."/>
            <person name="Rast T.J."/>
            <person name="Martchenko M."/>
            <person name="Grindle S."/>
            <person name="Dignard D."/>
            <person name="Hogues H."/>
            <person name="Cuomo C."/>
            <person name="Berriman M."/>
            <person name="Scherer S."/>
            <person name="Magee B.B."/>
            <person name="Whiteway M."/>
            <person name="Chibana H."/>
            <person name="Nantel A."/>
            <person name="Magee P.T."/>
        </authorList>
    </citation>
    <scope>GENOME REANNOTATION</scope>
    <source>
        <strain>SC5314 / ATCC MYA-2876</strain>
    </source>
</reference>
<reference key="4">
    <citation type="journal article" date="2013" name="Genome Biol.">
        <title>Assembly of a phased diploid Candida albicans genome facilitates allele-specific measurements and provides a simple model for repeat and indel structure.</title>
        <authorList>
            <person name="Muzzey D."/>
            <person name="Schwartz K."/>
            <person name="Weissman J.S."/>
            <person name="Sherlock G."/>
        </authorList>
    </citation>
    <scope>NUCLEOTIDE SEQUENCE [LARGE SCALE GENOMIC DNA]</scope>
    <scope>GENOME REANNOTATION</scope>
    <source>
        <strain>SC5314 / ATCC MYA-2876</strain>
    </source>
</reference>